<protein>
    <recommendedName>
        <fullName evidence="8">Villin-5</fullName>
    </recommendedName>
</protein>
<name>VILI5_ARATH</name>
<accession>Q9LVC6</accession>
<keyword id="KW-0117">Actin capping</keyword>
<keyword id="KW-0009">Actin-binding</keyword>
<keyword id="KW-0106">Calcium</keyword>
<keyword id="KW-0963">Cytoplasm</keyword>
<keyword id="KW-0206">Cytoskeleton</keyword>
<keyword id="KW-0597">Phosphoprotein</keyword>
<keyword id="KW-1185">Reference proteome</keyword>
<keyword id="KW-0677">Repeat</keyword>
<organism>
    <name type="scientific">Arabidopsis thaliana</name>
    <name type="common">Mouse-ear cress</name>
    <dbReference type="NCBI Taxonomy" id="3702"/>
    <lineage>
        <taxon>Eukaryota</taxon>
        <taxon>Viridiplantae</taxon>
        <taxon>Streptophyta</taxon>
        <taxon>Embryophyta</taxon>
        <taxon>Tracheophyta</taxon>
        <taxon>Spermatophyta</taxon>
        <taxon>Magnoliopsida</taxon>
        <taxon>eudicotyledons</taxon>
        <taxon>Gunneridae</taxon>
        <taxon>Pentapetalae</taxon>
        <taxon>rosids</taxon>
        <taxon>malvids</taxon>
        <taxon>Brassicales</taxon>
        <taxon>Brassicaceae</taxon>
        <taxon>Camelineae</taxon>
        <taxon>Arabidopsis</taxon>
    </lineage>
</organism>
<feature type="chain" id="PRO_0000430591" description="Villin-5">
    <location>
        <begin position="1"/>
        <end position="962"/>
    </location>
</feature>
<feature type="repeat" description="Gelsolin-like 1" evidence="3">
    <location>
        <begin position="29"/>
        <end position="79"/>
    </location>
</feature>
<feature type="repeat" description="Gelsolin-like 2" evidence="3">
    <location>
        <begin position="150"/>
        <end position="190"/>
    </location>
</feature>
<feature type="repeat" description="Gelsolin-like 3" evidence="3">
    <location>
        <begin position="262"/>
        <end position="305"/>
    </location>
</feature>
<feature type="repeat" description="Gelsolin-like 4" evidence="3">
    <location>
        <begin position="396"/>
        <end position="453"/>
    </location>
</feature>
<feature type="repeat" description="Gelsolin-like 5" evidence="3">
    <location>
        <begin position="534"/>
        <end position="574"/>
    </location>
</feature>
<feature type="repeat" description="Gelsolin-like 6" evidence="3">
    <location>
        <begin position="636"/>
        <end position="677"/>
    </location>
</feature>
<feature type="domain" description="HP" evidence="4">
    <location>
        <begin position="897"/>
        <end position="962"/>
    </location>
</feature>
<feature type="region of interest" description="Disordered" evidence="5">
    <location>
        <begin position="749"/>
        <end position="785"/>
    </location>
</feature>
<feature type="region of interest" description="Disordered" evidence="5">
    <location>
        <begin position="845"/>
        <end position="917"/>
    </location>
</feature>
<feature type="compositionally biased region" description="Polar residues" evidence="5">
    <location>
        <begin position="758"/>
        <end position="776"/>
    </location>
</feature>
<feature type="compositionally biased region" description="Low complexity" evidence="5">
    <location>
        <begin position="845"/>
        <end position="862"/>
    </location>
</feature>
<feature type="compositionally biased region" description="Polar residues" evidence="5">
    <location>
        <begin position="863"/>
        <end position="875"/>
    </location>
</feature>
<feature type="compositionally biased region" description="Acidic residues" evidence="5">
    <location>
        <begin position="889"/>
        <end position="898"/>
    </location>
</feature>
<feature type="modified residue" description="Phosphoserine" evidence="1">
    <location>
        <position position="777"/>
    </location>
</feature>
<feature type="modified residue" description="Phosphoserine" evidence="1">
    <location>
        <position position="787"/>
    </location>
</feature>
<feature type="modified residue" description="Phosphoserine" evidence="2">
    <location>
        <position position="883"/>
    </location>
</feature>
<sequence length="962" mass="107826">MTFSMRDLDQALQGAGQKSGIEIWRIENFKPVTVPQESHGKFFTGDSYIVLKTTASRSGSLHHDIHYWLGKDSSQDEAGAVAVMTVELDSALGGRAVQYREVQGHETEKFLSYFKPCIIPQEGGVASGFNHVKPEEHQTRLYICKGKHVVRVKEVPFVRSTLNHEDVFILDTESKIFQFSGSKSSIQERAKALEVVQYIKDTYHDGKCDIAAVEDGRMMADAEAGEFWGLFGGFAPLPKKPAVNDDETAASDGIKLFSVEKGQTDAVEAECLTKELLDTNKCYILDCGLELFVWKGRSTSIDQRKSATEAAEEFFRSSEPPKSNLVSVMEGYETVMFRSKFDSWPASSTIAEPQQGRGKVAALLQRQGVNVQGLVKTSSSSSKDEPKPYIDGTGNLQVWRINCEEKILLEAAEQSKFYSGDCYILQYSYPGEDREEHLVGTWFGKQSVEEDRASAISLANKMVESMKFVPAQARINEGKEPIQFFVIMQSFITFKGGVSDAFKKYIAENDIPDTTYEAEGVALFRVQGSGPENMQAIQIEAASAGLNSSHCYILHGDSTVFTWCGNLTSSEDQELMERMLDLIKPNEPTKAQKEGSESEQFWELLGGKSEYPSQKIKRDGESDPHLFSCTYTNESLKATEIFNFTQDDLMTEDIFILDCHTEVFVWVGQQVDPKKKPQALDIGENFLKHDFLLENLASETPIYIVTEGNEPPFFTRFFTWDSSKSGMHGDSFQRKLAILTNKGKPLLDKPKRRVPAYSSRSTVPDKSQPRSRSMTFSPDRARVRGRSPAFNALAANFEKLNIRNQSTPPPMVSPMVRKLYPKSHAPDLSKIAPKSAIAARTALFEKPTPTSQEPPTSPSSSEATNQAEAPKSTSETNEEEAMSSINEDSKEEEAEEESSLPTFPYERLKTDSEDPVSDVDLTRREAYLTSVEFKEKFEMTKNEFYKLPKWKQNKLKMSVNLF</sequence>
<evidence type="ECO:0000250" key="1">
    <source>
        <dbReference type="UniProtKB" id="O65570"/>
    </source>
</evidence>
<evidence type="ECO:0000250" key="2">
    <source>
        <dbReference type="UniProtKB" id="O81645"/>
    </source>
</evidence>
<evidence type="ECO:0000255" key="3"/>
<evidence type="ECO:0000255" key="4">
    <source>
        <dbReference type="PROSITE-ProRule" id="PRU00595"/>
    </source>
</evidence>
<evidence type="ECO:0000256" key="5">
    <source>
        <dbReference type="SAM" id="MobiDB-lite"/>
    </source>
</evidence>
<evidence type="ECO:0000269" key="6">
    <source>
    </source>
</evidence>
<evidence type="ECO:0000269" key="7">
    <source>
    </source>
</evidence>
<evidence type="ECO:0000303" key="8">
    <source>
    </source>
</evidence>
<evidence type="ECO:0000305" key="9"/>
<evidence type="ECO:0000312" key="10">
    <source>
        <dbReference type="Araport" id="AT5G57320"/>
    </source>
</evidence>
<evidence type="ECO:0000312" key="11">
    <source>
        <dbReference type="EMBL" id="BAA96955.1"/>
    </source>
</evidence>
<comment type="function">
    <text evidence="6 7">Major actin filament stabilizing factor and regulator of actin dynamics. Binds actin and actin filament bundles in a Ca(2+)-insensitive manner, but caps the barbed end of actin filaments and is able to sever them in a calcium-dependent manner. Required for the construction of actin collars in pollen tubes. Acts synergistically with VLN2 (AC O81644) to regulate polarized pollen tube growth.</text>
</comment>
<comment type="subcellular location">
    <subcellularLocation>
        <location evidence="7">Cytoplasm</location>
        <location evidence="7">Cytoskeleton</location>
    </subcellularLocation>
    <text evidence="7">Present in the apical and subapical regions of pollen tubes.</text>
</comment>
<comment type="tissue specificity">
    <text evidence="6">Ubiquitous, but expressed preferentially in pollen and stamens.</text>
</comment>
<comment type="disruption phenotype">
    <text evidence="6 7">Retarded pollen tube growth, but no effect on pollen germination, root hair growth, organization or amount of filamentous actin in pollen grains or tubes. Increased sensitivity to latrunculin B (LatB) and instability of actin filaments in pollen tubes. Decreased severing frequency of actin filaments. Vln2 and vln5 double mutants have pollen tubes curled and wider at some regions along the tube. They accumulate actin filaments at the tips of pollen tubes (PubMed:23715472).</text>
</comment>
<comment type="similarity">
    <text evidence="9">Belongs to the villin/gelsolin family.</text>
</comment>
<gene>
    <name evidence="8" type="primary">VLN5</name>
    <name evidence="10" type="ordered locus">At5g57320</name>
    <name evidence="11" type="ORF">MJB24.13</name>
</gene>
<proteinExistence type="evidence at transcript level"/>
<dbReference type="EMBL" id="AB019233">
    <property type="protein sequence ID" value="BAA96955.1"/>
    <property type="molecule type" value="Genomic_DNA"/>
</dbReference>
<dbReference type="EMBL" id="CP002688">
    <property type="protein sequence ID" value="AED96884.1"/>
    <property type="molecule type" value="Genomic_DNA"/>
</dbReference>
<dbReference type="EMBL" id="CP002688">
    <property type="protein sequence ID" value="ANM70704.1"/>
    <property type="molecule type" value="Genomic_DNA"/>
</dbReference>
<dbReference type="RefSeq" id="NP_001318818.1">
    <property type="nucleotide sequence ID" value="NM_001345256.1"/>
</dbReference>
<dbReference type="RefSeq" id="NP_001332290.1">
    <property type="nucleotide sequence ID" value="NM_001345257.1"/>
</dbReference>
<dbReference type="SMR" id="Q9LVC6"/>
<dbReference type="FunCoup" id="Q9LVC6">
    <property type="interactions" value="290"/>
</dbReference>
<dbReference type="STRING" id="3702.Q9LVC6"/>
<dbReference type="iPTMnet" id="Q9LVC6"/>
<dbReference type="PaxDb" id="3702-AT5G57320.1"/>
<dbReference type="ProteomicsDB" id="242542"/>
<dbReference type="EnsemblPlants" id="AT5G57320.1">
    <property type="protein sequence ID" value="AT5G57320.1"/>
    <property type="gene ID" value="AT5G57320"/>
</dbReference>
<dbReference type="EnsemblPlants" id="AT5G57320.2">
    <property type="protein sequence ID" value="AT5G57320.2"/>
    <property type="gene ID" value="AT5G57320"/>
</dbReference>
<dbReference type="GeneID" id="835837"/>
<dbReference type="Gramene" id="AT5G57320.1">
    <property type="protein sequence ID" value="AT5G57320.1"/>
    <property type="gene ID" value="AT5G57320"/>
</dbReference>
<dbReference type="Gramene" id="AT5G57320.2">
    <property type="protein sequence ID" value="AT5G57320.2"/>
    <property type="gene ID" value="AT5G57320"/>
</dbReference>
<dbReference type="KEGG" id="ath:AT5G57320"/>
<dbReference type="Araport" id="AT5G57320"/>
<dbReference type="TAIR" id="AT5G57320">
    <property type="gene designation" value="VLN5"/>
</dbReference>
<dbReference type="eggNOG" id="KOG0443">
    <property type="taxonomic scope" value="Eukaryota"/>
</dbReference>
<dbReference type="HOGENOM" id="CLU_002568_2_1_1"/>
<dbReference type="InParanoid" id="Q9LVC6"/>
<dbReference type="OMA" id="WRINCEE"/>
<dbReference type="PhylomeDB" id="Q9LVC6"/>
<dbReference type="PRO" id="PR:Q9LVC6"/>
<dbReference type="Proteomes" id="UP000006548">
    <property type="component" value="Chromosome 5"/>
</dbReference>
<dbReference type="ExpressionAtlas" id="Q9LVC6">
    <property type="expression patterns" value="baseline and differential"/>
</dbReference>
<dbReference type="GO" id="GO:0005737">
    <property type="term" value="C:cytoplasm"/>
    <property type="evidence" value="ECO:0007669"/>
    <property type="project" value="UniProtKB-KW"/>
</dbReference>
<dbReference type="GO" id="GO:0005856">
    <property type="term" value="C:cytoskeleton"/>
    <property type="evidence" value="ECO:0007669"/>
    <property type="project" value="UniProtKB-SubCell"/>
</dbReference>
<dbReference type="GO" id="GO:0051015">
    <property type="term" value="F:actin filament binding"/>
    <property type="evidence" value="ECO:0007669"/>
    <property type="project" value="InterPro"/>
</dbReference>
<dbReference type="GO" id="GO:0051693">
    <property type="term" value="P:actin filament capping"/>
    <property type="evidence" value="ECO:0007669"/>
    <property type="project" value="UniProtKB-KW"/>
</dbReference>
<dbReference type="GO" id="GO:0007015">
    <property type="term" value="P:actin filament organization"/>
    <property type="evidence" value="ECO:0007669"/>
    <property type="project" value="UniProtKB-ARBA"/>
</dbReference>
<dbReference type="CDD" id="cd11290">
    <property type="entry name" value="gelsolin_S1_like"/>
    <property type="match status" value="1"/>
</dbReference>
<dbReference type="CDD" id="cd11289">
    <property type="entry name" value="gelsolin_S2_like"/>
    <property type="match status" value="1"/>
</dbReference>
<dbReference type="CDD" id="cd11292">
    <property type="entry name" value="gelsolin_S3_like"/>
    <property type="match status" value="1"/>
</dbReference>
<dbReference type="CDD" id="cd11293">
    <property type="entry name" value="gelsolin_S4_like"/>
    <property type="match status" value="1"/>
</dbReference>
<dbReference type="CDD" id="cd11288">
    <property type="entry name" value="gelsolin_S5_like"/>
    <property type="match status" value="1"/>
</dbReference>
<dbReference type="CDD" id="cd11291">
    <property type="entry name" value="gelsolin_S6_like"/>
    <property type="match status" value="1"/>
</dbReference>
<dbReference type="FunFam" id="3.40.20.10:FF:000001">
    <property type="entry name" value="Gelsolin"/>
    <property type="match status" value="1"/>
</dbReference>
<dbReference type="FunFam" id="3.40.20.10:FF:000002">
    <property type="entry name" value="Gelsolin"/>
    <property type="match status" value="1"/>
</dbReference>
<dbReference type="FunFam" id="3.40.20.10:FF:000033">
    <property type="entry name" value="Villin-4"/>
    <property type="match status" value="1"/>
</dbReference>
<dbReference type="FunFam" id="3.40.20.10:FF:000028">
    <property type="entry name" value="Villin-like 1"/>
    <property type="match status" value="1"/>
</dbReference>
<dbReference type="FunFam" id="3.40.20.10:FF:000038">
    <property type="entry name" value="Villin-like 1"/>
    <property type="match status" value="1"/>
</dbReference>
<dbReference type="Gene3D" id="3.40.20.10">
    <property type="entry name" value="Severin"/>
    <property type="match status" value="6"/>
</dbReference>
<dbReference type="Gene3D" id="1.10.950.10">
    <property type="entry name" value="Villin headpiece domain"/>
    <property type="match status" value="1"/>
</dbReference>
<dbReference type="InterPro" id="IPR029006">
    <property type="entry name" value="ADF-H/Gelsolin-like_dom_sf"/>
</dbReference>
<dbReference type="InterPro" id="IPR007123">
    <property type="entry name" value="Gelsolin-like_dom"/>
</dbReference>
<dbReference type="InterPro" id="IPR007122">
    <property type="entry name" value="Villin/Gelsolin"/>
</dbReference>
<dbReference type="InterPro" id="IPR003128">
    <property type="entry name" value="Villin_headpiece"/>
</dbReference>
<dbReference type="InterPro" id="IPR036886">
    <property type="entry name" value="Villin_headpiece_dom_sf"/>
</dbReference>
<dbReference type="PANTHER" id="PTHR11977">
    <property type="entry name" value="VILLIN"/>
    <property type="match status" value="1"/>
</dbReference>
<dbReference type="PANTHER" id="PTHR11977:SF103">
    <property type="entry name" value="VILLIN-5"/>
    <property type="match status" value="1"/>
</dbReference>
<dbReference type="Pfam" id="PF00626">
    <property type="entry name" value="Gelsolin"/>
    <property type="match status" value="4"/>
</dbReference>
<dbReference type="Pfam" id="PF02209">
    <property type="entry name" value="VHP"/>
    <property type="match status" value="1"/>
</dbReference>
<dbReference type="PRINTS" id="PR00597">
    <property type="entry name" value="GELSOLIN"/>
</dbReference>
<dbReference type="SMART" id="SM00262">
    <property type="entry name" value="GEL"/>
    <property type="match status" value="6"/>
</dbReference>
<dbReference type="SMART" id="SM00153">
    <property type="entry name" value="VHP"/>
    <property type="match status" value="1"/>
</dbReference>
<dbReference type="SUPFAM" id="SSF55753">
    <property type="entry name" value="Actin depolymerizing proteins"/>
    <property type="match status" value="6"/>
</dbReference>
<dbReference type="SUPFAM" id="SSF47050">
    <property type="entry name" value="VHP, Villin headpiece domain"/>
    <property type="match status" value="1"/>
</dbReference>
<dbReference type="PROSITE" id="PS51089">
    <property type="entry name" value="HP"/>
    <property type="match status" value="1"/>
</dbReference>
<reference key="1">
    <citation type="journal article" date="2000" name="DNA Res.">
        <title>Structural analysis of Arabidopsis thaliana chromosome 5. X. Sequence features of the regions of 3,076,755 bp covered by sixty P1 and TAC clones.</title>
        <authorList>
            <person name="Sato S."/>
            <person name="Nakamura Y."/>
            <person name="Kaneko T."/>
            <person name="Katoh T."/>
            <person name="Asamizu E."/>
            <person name="Kotani H."/>
            <person name="Tabata S."/>
        </authorList>
    </citation>
    <scope>NUCLEOTIDE SEQUENCE [LARGE SCALE GENOMIC DNA]</scope>
    <source>
        <strain>cv. Columbia</strain>
    </source>
</reference>
<reference key="2">
    <citation type="journal article" date="2017" name="Plant J.">
        <title>Araport11: a complete reannotation of the Arabidopsis thaliana reference genome.</title>
        <authorList>
            <person name="Cheng C.Y."/>
            <person name="Krishnakumar V."/>
            <person name="Chan A.P."/>
            <person name="Thibaud-Nissen F."/>
            <person name="Schobel S."/>
            <person name="Town C.D."/>
        </authorList>
    </citation>
    <scope>GENOME REANNOTATION</scope>
    <source>
        <strain>cv. Columbia</strain>
    </source>
</reference>
<reference key="3">
    <citation type="journal article" date="2010" name="Plant Cell">
        <title>Arabidopsis VILLIN5, an actin filament bundling and severing protein, is necessary for normal pollen tube growth.</title>
        <authorList>
            <person name="Zhang H."/>
            <person name="Qu X."/>
            <person name="Bao C."/>
            <person name="Khurana P."/>
            <person name="Wang Q."/>
            <person name="Xie Y."/>
            <person name="Zheng Y."/>
            <person name="Chen N."/>
            <person name="Blanchoin L."/>
            <person name="Staiger C.J."/>
            <person name="Huang S."/>
        </authorList>
    </citation>
    <scope>FUNCTION</scope>
    <scope>TISSUE SPECIFICITY</scope>
    <scope>DISRUPTION PHENOTYPE</scope>
    <source>
        <strain>cv. Columbia</strain>
    </source>
</reference>
<reference key="4">
    <citation type="journal article" date="2013" name="Plant Cell">
        <title>Arabidopsis villins promote actin turnover at pollen tube tips and facilitate the construction of actin collars.</title>
        <authorList>
            <person name="Qu X."/>
            <person name="Zhang H."/>
            <person name="Xie Y."/>
            <person name="Wang J."/>
            <person name="Chen N."/>
            <person name="Huang S."/>
        </authorList>
    </citation>
    <scope>FUNCTION</scope>
    <scope>DISRUPTION PHENOTYPE</scope>
    <scope>SUBCELLULAR LOCATION</scope>
</reference>